<feature type="chain" id="PRO_0000111830" description="5'-nucleotidase SurE">
    <location>
        <begin position="1"/>
        <end position="269"/>
    </location>
</feature>
<feature type="binding site" evidence="1">
    <location>
        <position position="11"/>
    </location>
    <ligand>
        <name>a divalent metal cation</name>
        <dbReference type="ChEBI" id="CHEBI:60240"/>
    </ligand>
</feature>
<feature type="binding site" evidence="1">
    <location>
        <position position="12"/>
    </location>
    <ligand>
        <name>a divalent metal cation</name>
        <dbReference type="ChEBI" id="CHEBI:60240"/>
    </ligand>
</feature>
<feature type="binding site" evidence="1">
    <location>
        <position position="43"/>
    </location>
    <ligand>
        <name>a divalent metal cation</name>
        <dbReference type="ChEBI" id="CHEBI:60240"/>
    </ligand>
</feature>
<feature type="binding site" evidence="1">
    <location>
        <position position="101"/>
    </location>
    <ligand>
        <name>a divalent metal cation</name>
        <dbReference type="ChEBI" id="CHEBI:60240"/>
    </ligand>
</feature>
<evidence type="ECO:0000255" key="1">
    <source>
        <dbReference type="HAMAP-Rule" id="MF_00060"/>
    </source>
</evidence>
<keyword id="KW-0963">Cytoplasm</keyword>
<keyword id="KW-0378">Hydrolase</keyword>
<keyword id="KW-0479">Metal-binding</keyword>
<keyword id="KW-0547">Nucleotide-binding</keyword>
<protein>
    <recommendedName>
        <fullName evidence="1">5'-nucleotidase SurE</fullName>
        <ecNumber evidence="1">3.1.3.5</ecNumber>
    </recommendedName>
    <alternativeName>
        <fullName evidence="1">Nucleoside 5'-monophosphate phosphohydrolase</fullName>
    </alternativeName>
</protein>
<gene>
    <name evidence="1" type="primary">surE</name>
    <name type="ordered locus">PMM1271</name>
</gene>
<dbReference type="EC" id="3.1.3.5" evidence="1"/>
<dbReference type="EMBL" id="BX548174">
    <property type="protein sequence ID" value="CAE19730.1"/>
    <property type="molecule type" value="Genomic_DNA"/>
</dbReference>
<dbReference type="RefSeq" id="WP_011132905.1">
    <property type="nucleotide sequence ID" value="NC_005072.1"/>
</dbReference>
<dbReference type="SMR" id="Q7V0I6"/>
<dbReference type="STRING" id="59919.PMM1271"/>
<dbReference type="KEGG" id="pmm:PMM1271"/>
<dbReference type="eggNOG" id="COG0496">
    <property type="taxonomic scope" value="Bacteria"/>
</dbReference>
<dbReference type="HOGENOM" id="CLU_045192_1_3_3"/>
<dbReference type="OrthoDB" id="9780815at2"/>
<dbReference type="Proteomes" id="UP000001026">
    <property type="component" value="Chromosome"/>
</dbReference>
<dbReference type="GO" id="GO:0005737">
    <property type="term" value="C:cytoplasm"/>
    <property type="evidence" value="ECO:0007669"/>
    <property type="project" value="UniProtKB-SubCell"/>
</dbReference>
<dbReference type="GO" id="GO:0008254">
    <property type="term" value="F:3'-nucleotidase activity"/>
    <property type="evidence" value="ECO:0007669"/>
    <property type="project" value="TreeGrafter"/>
</dbReference>
<dbReference type="GO" id="GO:0008253">
    <property type="term" value="F:5'-nucleotidase activity"/>
    <property type="evidence" value="ECO:0007669"/>
    <property type="project" value="UniProtKB-UniRule"/>
</dbReference>
<dbReference type="GO" id="GO:0004309">
    <property type="term" value="F:exopolyphosphatase activity"/>
    <property type="evidence" value="ECO:0007669"/>
    <property type="project" value="TreeGrafter"/>
</dbReference>
<dbReference type="GO" id="GO:0046872">
    <property type="term" value="F:metal ion binding"/>
    <property type="evidence" value="ECO:0007669"/>
    <property type="project" value="UniProtKB-UniRule"/>
</dbReference>
<dbReference type="GO" id="GO:0000166">
    <property type="term" value="F:nucleotide binding"/>
    <property type="evidence" value="ECO:0007669"/>
    <property type="project" value="UniProtKB-KW"/>
</dbReference>
<dbReference type="FunFam" id="3.40.1210.10:FF:000001">
    <property type="entry name" value="5'/3'-nucleotidase SurE"/>
    <property type="match status" value="1"/>
</dbReference>
<dbReference type="Gene3D" id="3.40.1210.10">
    <property type="entry name" value="Survival protein SurE-like phosphatase/nucleotidase"/>
    <property type="match status" value="1"/>
</dbReference>
<dbReference type="HAMAP" id="MF_00060">
    <property type="entry name" value="SurE"/>
    <property type="match status" value="1"/>
</dbReference>
<dbReference type="InterPro" id="IPR030048">
    <property type="entry name" value="SurE"/>
</dbReference>
<dbReference type="InterPro" id="IPR002828">
    <property type="entry name" value="SurE-like_Pase/nucleotidase"/>
</dbReference>
<dbReference type="InterPro" id="IPR036523">
    <property type="entry name" value="SurE-like_sf"/>
</dbReference>
<dbReference type="NCBIfam" id="NF001490">
    <property type="entry name" value="PRK00346.1-4"/>
    <property type="match status" value="1"/>
</dbReference>
<dbReference type="NCBIfam" id="NF001492">
    <property type="entry name" value="PRK00346.2-2"/>
    <property type="match status" value="1"/>
</dbReference>
<dbReference type="NCBIfam" id="TIGR00087">
    <property type="entry name" value="surE"/>
    <property type="match status" value="1"/>
</dbReference>
<dbReference type="PANTHER" id="PTHR30457">
    <property type="entry name" value="5'-NUCLEOTIDASE SURE"/>
    <property type="match status" value="1"/>
</dbReference>
<dbReference type="PANTHER" id="PTHR30457:SF12">
    <property type="entry name" value="5'_3'-NUCLEOTIDASE SURE"/>
    <property type="match status" value="1"/>
</dbReference>
<dbReference type="Pfam" id="PF01975">
    <property type="entry name" value="SurE"/>
    <property type="match status" value="1"/>
</dbReference>
<dbReference type="SUPFAM" id="SSF64167">
    <property type="entry name" value="SurE-like"/>
    <property type="match status" value="1"/>
</dbReference>
<accession>Q7V0I6</accession>
<comment type="function">
    <text evidence="1">Nucleotidase that shows phosphatase activity on nucleoside 5'-monophosphates.</text>
</comment>
<comment type="catalytic activity">
    <reaction evidence="1">
        <text>a ribonucleoside 5'-phosphate + H2O = a ribonucleoside + phosphate</text>
        <dbReference type="Rhea" id="RHEA:12484"/>
        <dbReference type="ChEBI" id="CHEBI:15377"/>
        <dbReference type="ChEBI" id="CHEBI:18254"/>
        <dbReference type="ChEBI" id="CHEBI:43474"/>
        <dbReference type="ChEBI" id="CHEBI:58043"/>
        <dbReference type="EC" id="3.1.3.5"/>
    </reaction>
</comment>
<comment type="cofactor">
    <cofactor evidence="1">
        <name>a divalent metal cation</name>
        <dbReference type="ChEBI" id="CHEBI:60240"/>
    </cofactor>
    <text evidence="1">Binds 1 divalent metal cation per subunit.</text>
</comment>
<comment type="subcellular location">
    <subcellularLocation>
        <location evidence="1">Cytoplasm</location>
    </subcellularLocation>
</comment>
<comment type="similarity">
    <text evidence="1">Belongs to the SurE nucleotidase family.</text>
</comment>
<sequence>MESLNILISNDDGVFAEGIRALAKSALKKGHKVTVVCPDQERSATGHGLTLQSPLRVERADELFDKGIKAWGCSGTPADCVKLALSELLDKKPDLVLSGINHGPNLGTDIFCSGTVAAAMEGTLENVPSMAISVASFKWKNFEFAGEIAMNIAEQAIKDSWPKSLLLNLNIPPCERNKIKELSWTRLSIRKYKNQFSKREDPRGDDYYWLAGEAVLDLKSKGDGPKNWPSDVSQIQENKISLTPVEPDLFWRGSIDVLPKINTSFINAS</sequence>
<organism>
    <name type="scientific">Prochlorococcus marinus subsp. pastoris (strain CCMP1986 / NIES-2087 / MED4)</name>
    <dbReference type="NCBI Taxonomy" id="59919"/>
    <lineage>
        <taxon>Bacteria</taxon>
        <taxon>Bacillati</taxon>
        <taxon>Cyanobacteriota</taxon>
        <taxon>Cyanophyceae</taxon>
        <taxon>Synechococcales</taxon>
        <taxon>Prochlorococcaceae</taxon>
        <taxon>Prochlorococcus</taxon>
    </lineage>
</organism>
<reference key="1">
    <citation type="journal article" date="2003" name="Nature">
        <title>Genome divergence in two Prochlorococcus ecotypes reflects oceanic niche differentiation.</title>
        <authorList>
            <person name="Rocap G."/>
            <person name="Larimer F.W."/>
            <person name="Lamerdin J.E."/>
            <person name="Malfatti S."/>
            <person name="Chain P."/>
            <person name="Ahlgren N.A."/>
            <person name="Arellano A."/>
            <person name="Coleman M."/>
            <person name="Hauser L."/>
            <person name="Hess W.R."/>
            <person name="Johnson Z.I."/>
            <person name="Land M.L."/>
            <person name="Lindell D."/>
            <person name="Post A.F."/>
            <person name="Regala W."/>
            <person name="Shah M."/>
            <person name="Shaw S.L."/>
            <person name="Steglich C."/>
            <person name="Sullivan M.B."/>
            <person name="Ting C.S."/>
            <person name="Tolonen A."/>
            <person name="Webb E.A."/>
            <person name="Zinser E.R."/>
            <person name="Chisholm S.W."/>
        </authorList>
    </citation>
    <scope>NUCLEOTIDE SEQUENCE [LARGE SCALE GENOMIC DNA]</scope>
    <source>
        <strain>CCMP1986 / NIES-2087 / MED4</strain>
    </source>
</reference>
<proteinExistence type="inferred from homology"/>
<name>SURE_PROMP</name>